<evidence type="ECO:0000250" key="1"/>
<evidence type="ECO:0000255" key="2"/>
<evidence type="ECO:0000305" key="3"/>
<name>CDSA_SYNY3</name>
<accession>P73548</accession>
<sequence>MPTQRIISAVIGIALAFSLLILGGWYFSAAIALVIYLGLREYFQMVRAKGIAPAAKTTMVLSLMLLLSATVTPHLTDAFFPLTGALICFYLLFQPKMATIADISTSLLGLFYGGYLPSYWVRLRLGDGAVNPMGLHLPLNGFWPESWAHPENFPTGLLVTILAFACIWAADIGAYIMGKWLGRTRLSDISPKKTVEGSLWGVGGSLLVGVLGAWYLQWPYWEITGALLGLLIGIVSLLGDLTESMMKRDAGVKDSGQLIPGHGGILDRTDSYVFTAPLVYYFVVLLLPVLNNL</sequence>
<proteinExistence type="inferred from homology"/>
<protein>
    <recommendedName>
        <fullName>Phosphatidate cytidylyltransferase</fullName>
        <ecNumber>2.7.7.41</ecNumber>
    </recommendedName>
    <alternativeName>
        <fullName>CDP-DAG synthase</fullName>
    </alternativeName>
    <alternativeName>
        <fullName>CDP-DG synthase</fullName>
    </alternativeName>
    <alternativeName>
        <fullName>CDP-diacylglycerol synthase</fullName>
        <shortName>CDS</shortName>
    </alternativeName>
    <alternativeName>
        <fullName>CDP-diglyceride pyrophosphorylase</fullName>
    </alternativeName>
    <alternativeName>
        <fullName>CDP-diglyceride synthase</fullName>
    </alternativeName>
    <alternativeName>
        <fullName>CTP:phosphatidate cytidylyltransferase</fullName>
    </alternativeName>
</protein>
<dbReference type="EC" id="2.7.7.41"/>
<dbReference type="EMBL" id="BA000022">
    <property type="protein sequence ID" value="BAA17588.1"/>
    <property type="molecule type" value="Genomic_DNA"/>
</dbReference>
<dbReference type="PIR" id="S77254">
    <property type="entry name" value="S77254"/>
</dbReference>
<dbReference type="SMR" id="P73548"/>
<dbReference type="FunCoup" id="P73548">
    <property type="interactions" value="427"/>
</dbReference>
<dbReference type="IntAct" id="P73548">
    <property type="interactions" value="4"/>
</dbReference>
<dbReference type="STRING" id="1148.gene:10498455"/>
<dbReference type="PaxDb" id="1148-1652668"/>
<dbReference type="DNASU" id="954211"/>
<dbReference type="EnsemblBacteria" id="BAA17588">
    <property type="protein sequence ID" value="BAA17588"/>
    <property type="gene ID" value="BAA17588"/>
</dbReference>
<dbReference type="KEGG" id="syn:slr1369"/>
<dbReference type="eggNOG" id="COG0575">
    <property type="taxonomic scope" value="Bacteria"/>
</dbReference>
<dbReference type="InParanoid" id="P73548"/>
<dbReference type="PhylomeDB" id="P73548"/>
<dbReference type="UniPathway" id="UPA00557">
    <property type="reaction ID" value="UER00614"/>
</dbReference>
<dbReference type="Proteomes" id="UP000001425">
    <property type="component" value="Chromosome"/>
</dbReference>
<dbReference type="GO" id="GO:0005886">
    <property type="term" value="C:plasma membrane"/>
    <property type="evidence" value="ECO:0007669"/>
    <property type="project" value="UniProtKB-SubCell"/>
</dbReference>
<dbReference type="GO" id="GO:0004605">
    <property type="term" value="F:phosphatidate cytidylyltransferase activity"/>
    <property type="evidence" value="ECO:0007669"/>
    <property type="project" value="UniProtKB-EC"/>
</dbReference>
<dbReference type="GO" id="GO:0016024">
    <property type="term" value="P:CDP-diacylglycerol biosynthetic process"/>
    <property type="evidence" value="ECO:0007669"/>
    <property type="project" value="UniProtKB-UniPathway"/>
</dbReference>
<dbReference type="InterPro" id="IPR000374">
    <property type="entry name" value="PC_trans"/>
</dbReference>
<dbReference type="PANTHER" id="PTHR47101:SF1">
    <property type="entry name" value="PHOSPHATIDATE CYTIDYLYLTRANSFERASE 4, CHLOROPLASTIC"/>
    <property type="match status" value="1"/>
</dbReference>
<dbReference type="PANTHER" id="PTHR47101">
    <property type="entry name" value="PHOSPHATIDATE CYTIDYLYLTRANSFERASE 5, CHLOROPLASTIC"/>
    <property type="match status" value="1"/>
</dbReference>
<dbReference type="Pfam" id="PF01148">
    <property type="entry name" value="CTP_transf_1"/>
    <property type="match status" value="1"/>
</dbReference>
<dbReference type="PROSITE" id="PS01315">
    <property type="entry name" value="CDS"/>
    <property type="match status" value="1"/>
</dbReference>
<comment type="catalytic activity">
    <reaction>
        <text>a 1,2-diacyl-sn-glycero-3-phosphate + CTP + H(+) = a CDP-1,2-diacyl-sn-glycerol + diphosphate</text>
        <dbReference type="Rhea" id="RHEA:16229"/>
        <dbReference type="ChEBI" id="CHEBI:15378"/>
        <dbReference type="ChEBI" id="CHEBI:33019"/>
        <dbReference type="ChEBI" id="CHEBI:37563"/>
        <dbReference type="ChEBI" id="CHEBI:58332"/>
        <dbReference type="ChEBI" id="CHEBI:58608"/>
        <dbReference type="EC" id="2.7.7.41"/>
    </reaction>
</comment>
<comment type="pathway">
    <text>Phospholipid metabolism; CDP-diacylglycerol biosynthesis; CDP-diacylglycerol from sn-glycerol 3-phosphate: step 3/3.</text>
</comment>
<comment type="subcellular location">
    <subcellularLocation>
        <location evidence="1">Cell membrane</location>
        <topology evidence="1">Multi-pass membrane protein</topology>
    </subcellularLocation>
</comment>
<comment type="similarity">
    <text evidence="3">Belongs to the CDS family.</text>
</comment>
<feature type="chain" id="PRO_0000090757" description="Phosphatidate cytidylyltransferase">
    <location>
        <begin position="1"/>
        <end position="293"/>
    </location>
</feature>
<feature type="transmembrane region" description="Helical" evidence="2">
    <location>
        <begin position="6"/>
        <end position="26"/>
    </location>
</feature>
<feature type="transmembrane region" description="Helical" evidence="2">
    <location>
        <begin position="51"/>
        <end position="71"/>
    </location>
</feature>
<feature type="transmembrane region" description="Helical" evidence="2">
    <location>
        <begin position="73"/>
        <end position="93"/>
    </location>
</feature>
<feature type="transmembrane region" description="Helical" evidence="2">
    <location>
        <begin position="97"/>
        <end position="117"/>
    </location>
</feature>
<feature type="transmembrane region" description="Helical" evidence="2">
    <location>
        <begin position="157"/>
        <end position="177"/>
    </location>
</feature>
<feature type="transmembrane region" description="Helical" evidence="2">
    <location>
        <begin position="195"/>
        <end position="215"/>
    </location>
</feature>
<feature type="transmembrane region" description="Helical" evidence="2">
    <location>
        <begin position="218"/>
        <end position="238"/>
    </location>
</feature>
<feature type="transmembrane region" description="Helical" evidence="2">
    <location>
        <begin position="273"/>
        <end position="293"/>
    </location>
</feature>
<keyword id="KW-1003">Cell membrane</keyword>
<keyword id="KW-0444">Lipid biosynthesis</keyword>
<keyword id="KW-0443">Lipid metabolism</keyword>
<keyword id="KW-0472">Membrane</keyword>
<keyword id="KW-0548">Nucleotidyltransferase</keyword>
<keyword id="KW-0594">Phospholipid biosynthesis</keyword>
<keyword id="KW-1208">Phospholipid metabolism</keyword>
<keyword id="KW-1185">Reference proteome</keyword>
<keyword id="KW-0808">Transferase</keyword>
<keyword id="KW-0812">Transmembrane</keyword>
<keyword id="KW-1133">Transmembrane helix</keyword>
<gene>
    <name type="primary">cdsA</name>
    <name type="ordered locus">slr1369</name>
</gene>
<reference key="1">
    <citation type="journal article" date="1996" name="DNA Res.">
        <title>Sequence analysis of the genome of the unicellular cyanobacterium Synechocystis sp. strain PCC6803. II. Sequence determination of the entire genome and assignment of potential protein-coding regions.</title>
        <authorList>
            <person name="Kaneko T."/>
            <person name="Sato S."/>
            <person name="Kotani H."/>
            <person name="Tanaka A."/>
            <person name="Asamizu E."/>
            <person name="Nakamura Y."/>
            <person name="Miyajima N."/>
            <person name="Hirosawa M."/>
            <person name="Sugiura M."/>
            <person name="Sasamoto S."/>
            <person name="Kimura T."/>
            <person name="Hosouchi T."/>
            <person name="Matsuno A."/>
            <person name="Muraki A."/>
            <person name="Nakazaki N."/>
            <person name="Naruo K."/>
            <person name="Okumura S."/>
            <person name="Shimpo S."/>
            <person name="Takeuchi C."/>
            <person name="Wada T."/>
            <person name="Watanabe A."/>
            <person name="Yamada M."/>
            <person name="Yasuda M."/>
            <person name="Tabata S."/>
        </authorList>
    </citation>
    <scope>NUCLEOTIDE SEQUENCE [LARGE SCALE GENOMIC DNA]</scope>
    <source>
        <strain>ATCC 27184 / PCC 6803 / Kazusa</strain>
    </source>
</reference>
<organism>
    <name type="scientific">Synechocystis sp. (strain ATCC 27184 / PCC 6803 / Kazusa)</name>
    <dbReference type="NCBI Taxonomy" id="1111708"/>
    <lineage>
        <taxon>Bacteria</taxon>
        <taxon>Bacillati</taxon>
        <taxon>Cyanobacteriota</taxon>
        <taxon>Cyanophyceae</taxon>
        <taxon>Synechococcales</taxon>
        <taxon>Merismopediaceae</taxon>
        <taxon>Synechocystis</taxon>
    </lineage>
</organism>